<reference key="1">
    <citation type="journal article" date="2009" name="PLoS Genet.">
        <title>Organised genome dynamics in the Escherichia coli species results in highly diverse adaptive paths.</title>
        <authorList>
            <person name="Touchon M."/>
            <person name="Hoede C."/>
            <person name="Tenaillon O."/>
            <person name="Barbe V."/>
            <person name="Baeriswyl S."/>
            <person name="Bidet P."/>
            <person name="Bingen E."/>
            <person name="Bonacorsi S."/>
            <person name="Bouchier C."/>
            <person name="Bouvet O."/>
            <person name="Calteau A."/>
            <person name="Chiapello H."/>
            <person name="Clermont O."/>
            <person name="Cruveiller S."/>
            <person name="Danchin A."/>
            <person name="Diard M."/>
            <person name="Dossat C."/>
            <person name="Karoui M.E."/>
            <person name="Frapy E."/>
            <person name="Garry L."/>
            <person name="Ghigo J.M."/>
            <person name="Gilles A.M."/>
            <person name="Johnson J."/>
            <person name="Le Bouguenec C."/>
            <person name="Lescat M."/>
            <person name="Mangenot S."/>
            <person name="Martinez-Jehanne V."/>
            <person name="Matic I."/>
            <person name="Nassif X."/>
            <person name="Oztas S."/>
            <person name="Petit M.A."/>
            <person name="Pichon C."/>
            <person name="Rouy Z."/>
            <person name="Ruf C.S."/>
            <person name="Schneider D."/>
            <person name="Tourret J."/>
            <person name="Vacherie B."/>
            <person name="Vallenet D."/>
            <person name="Medigue C."/>
            <person name="Rocha E.P.C."/>
            <person name="Denamur E."/>
        </authorList>
    </citation>
    <scope>NUCLEOTIDE SEQUENCE [LARGE SCALE GENOMIC DNA]</scope>
    <source>
        <strain>S88 / ExPEC</strain>
    </source>
</reference>
<dbReference type="EC" id="2.1.3.2" evidence="1"/>
<dbReference type="EMBL" id="CU928161">
    <property type="protein sequence ID" value="CAR05983.1"/>
    <property type="molecule type" value="Genomic_DNA"/>
</dbReference>
<dbReference type="RefSeq" id="WP_000013046.1">
    <property type="nucleotide sequence ID" value="NC_011742.1"/>
</dbReference>
<dbReference type="SMR" id="B7MLQ3"/>
<dbReference type="GeneID" id="93777579"/>
<dbReference type="KEGG" id="ecz:ECS88_4835"/>
<dbReference type="HOGENOM" id="CLU_043846_1_2_6"/>
<dbReference type="UniPathway" id="UPA00070">
    <property type="reaction ID" value="UER00116"/>
</dbReference>
<dbReference type="Proteomes" id="UP000000747">
    <property type="component" value="Chromosome"/>
</dbReference>
<dbReference type="GO" id="GO:0005829">
    <property type="term" value="C:cytosol"/>
    <property type="evidence" value="ECO:0007669"/>
    <property type="project" value="TreeGrafter"/>
</dbReference>
<dbReference type="GO" id="GO:0016597">
    <property type="term" value="F:amino acid binding"/>
    <property type="evidence" value="ECO:0007669"/>
    <property type="project" value="InterPro"/>
</dbReference>
<dbReference type="GO" id="GO:0004070">
    <property type="term" value="F:aspartate carbamoyltransferase activity"/>
    <property type="evidence" value="ECO:0007669"/>
    <property type="project" value="UniProtKB-UniRule"/>
</dbReference>
<dbReference type="GO" id="GO:0006207">
    <property type="term" value="P:'de novo' pyrimidine nucleobase biosynthetic process"/>
    <property type="evidence" value="ECO:0007669"/>
    <property type="project" value="InterPro"/>
</dbReference>
<dbReference type="GO" id="GO:0044205">
    <property type="term" value="P:'de novo' UMP biosynthetic process"/>
    <property type="evidence" value="ECO:0007669"/>
    <property type="project" value="UniProtKB-UniRule"/>
</dbReference>
<dbReference type="GO" id="GO:0006520">
    <property type="term" value="P:amino acid metabolic process"/>
    <property type="evidence" value="ECO:0007669"/>
    <property type="project" value="InterPro"/>
</dbReference>
<dbReference type="FunFam" id="3.40.50.1370:FF:000001">
    <property type="entry name" value="Aspartate carbamoyltransferase"/>
    <property type="match status" value="1"/>
</dbReference>
<dbReference type="FunFam" id="3.40.50.1370:FF:000002">
    <property type="entry name" value="Aspartate carbamoyltransferase 2"/>
    <property type="match status" value="1"/>
</dbReference>
<dbReference type="Gene3D" id="3.40.50.1370">
    <property type="entry name" value="Aspartate/ornithine carbamoyltransferase"/>
    <property type="match status" value="2"/>
</dbReference>
<dbReference type="HAMAP" id="MF_00001">
    <property type="entry name" value="Asp_carb_tr"/>
    <property type="match status" value="1"/>
</dbReference>
<dbReference type="InterPro" id="IPR006132">
    <property type="entry name" value="Asp/Orn_carbamoyltranf_P-bd"/>
</dbReference>
<dbReference type="InterPro" id="IPR006130">
    <property type="entry name" value="Asp/Orn_carbamoylTrfase"/>
</dbReference>
<dbReference type="InterPro" id="IPR036901">
    <property type="entry name" value="Asp/Orn_carbamoylTrfase_sf"/>
</dbReference>
<dbReference type="InterPro" id="IPR002082">
    <property type="entry name" value="Asp_carbamoyltransf"/>
</dbReference>
<dbReference type="InterPro" id="IPR006131">
    <property type="entry name" value="Asp_carbamoyltransf_Asp/Orn-bd"/>
</dbReference>
<dbReference type="NCBIfam" id="TIGR00670">
    <property type="entry name" value="asp_carb_tr"/>
    <property type="match status" value="1"/>
</dbReference>
<dbReference type="NCBIfam" id="NF002032">
    <property type="entry name" value="PRK00856.1"/>
    <property type="match status" value="1"/>
</dbReference>
<dbReference type="PANTHER" id="PTHR45753:SF6">
    <property type="entry name" value="ASPARTATE CARBAMOYLTRANSFERASE"/>
    <property type="match status" value="1"/>
</dbReference>
<dbReference type="PANTHER" id="PTHR45753">
    <property type="entry name" value="ORNITHINE CARBAMOYLTRANSFERASE, MITOCHONDRIAL"/>
    <property type="match status" value="1"/>
</dbReference>
<dbReference type="Pfam" id="PF00185">
    <property type="entry name" value="OTCace"/>
    <property type="match status" value="1"/>
</dbReference>
<dbReference type="Pfam" id="PF02729">
    <property type="entry name" value="OTCace_N"/>
    <property type="match status" value="1"/>
</dbReference>
<dbReference type="PRINTS" id="PR00100">
    <property type="entry name" value="AOTCASE"/>
</dbReference>
<dbReference type="PRINTS" id="PR00101">
    <property type="entry name" value="ATCASE"/>
</dbReference>
<dbReference type="SUPFAM" id="SSF53671">
    <property type="entry name" value="Aspartate/ornithine carbamoyltransferase"/>
    <property type="match status" value="1"/>
</dbReference>
<dbReference type="PROSITE" id="PS00097">
    <property type="entry name" value="CARBAMOYLTRANSFERASE"/>
    <property type="match status" value="1"/>
</dbReference>
<feature type="chain" id="PRO_1000191906" description="Aspartate carbamoyltransferase catalytic subunit">
    <location>
        <begin position="1"/>
        <end position="311"/>
    </location>
</feature>
<feature type="binding site" evidence="1">
    <location>
        <position position="55"/>
    </location>
    <ligand>
        <name>carbamoyl phosphate</name>
        <dbReference type="ChEBI" id="CHEBI:58228"/>
    </ligand>
</feature>
<feature type="binding site" evidence="1">
    <location>
        <position position="56"/>
    </location>
    <ligand>
        <name>carbamoyl phosphate</name>
        <dbReference type="ChEBI" id="CHEBI:58228"/>
    </ligand>
</feature>
<feature type="binding site" evidence="1">
    <location>
        <position position="85"/>
    </location>
    <ligand>
        <name>L-aspartate</name>
        <dbReference type="ChEBI" id="CHEBI:29991"/>
    </ligand>
</feature>
<feature type="binding site" evidence="1">
    <location>
        <position position="106"/>
    </location>
    <ligand>
        <name>carbamoyl phosphate</name>
        <dbReference type="ChEBI" id="CHEBI:58228"/>
    </ligand>
</feature>
<feature type="binding site" evidence="1">
    <location>
        <position position="135"/>
    </location>
    <ligand>
        <name>carbamoyl phosphate</name>
        <dbReference type="ChEBI" id="CHEBI:58228"/>
    </ligand>
</feature>
<feature type="binding site" evidence="1">
    <location>
        <position position="138"/>
    </location>
    <ligand>
        <name>carbamoyl phosphate</name>
        <dbReference type="ChEBI" id="CHEBI:58228"/>
    </ligand>
</feature>
<feature type="binding site" evidence="1">
    <location>
        <position position="168"/>
    </location>
    <ligand>
        <name>L-aspartate</name>
        <dbReference type="ChEBI" id="CHEBI:29991"/>
    </ligand>
</feature>
<feature type="binding site" evidence="1">
    <location>
        <position position="230"/>
    </location>
    <ligand>
        <name>L-aspartate</name>
        <dbReference type="ChEBI" id="CHEBI:29991"/>
    </ligand>
</feature>
<feature type="binding site" evidence="1">
    <location>
        <position position="268"/>
    </location>
    <ligand>
        <name>carbamoyl phosphate</name>
        <dbReference type="ChEBI" id="CHEBI:58228"/>
    </ligand>
</feature>
<feature type="binding site" evidence="1">
    <location>
        <position position="269"/>
    </location>
    <ligand>
        <name>carbamoyl phosphate</name>
        <dbReference type="ChEBI" id="CHEBI:58228"/>
    </ligand>
</feature>
<sequence>MANPLYQKHIISINDLSRDDLNLVLATAAKLKANPQPELLKHKVIASCFFEASTRTRLSFETSMHRLGASVVGFSDSANTSLGKKGETLADTISVISTYVDAIVMRHPQEGAARLATEFSGNVPVLNAGDGSNQHPTQTLLDLFTIQETQGRLDNLHVAMVGDLKYGRTVHSLTQALAKFDGNRFYFIAPDALAMPQYILDMLDEKGIAWSLHSSIEEVMAEVDILYMTRVQKERLDPSEYANVKAQFVLRASDLHNAKANMKVLHPLPRVDEIATDVDKTPHAWYFQQAGNGIFARQALLALVLNRDLVL</sequence>
<gene>
    <name evidence="1" type="primary">pyrB</name>
    <name type="ordered locus">ECS88_4835</name>
</gene>
<name>PYRB_ECO45</name>
<keyword id="KW-0665">Pyrimidine biosynthesis</keyword>
<keyword id="KW-1185">Reference proteome</keyword>
<keyword id="KW-0808">Transferase</keyword>
<organism>
    <name type="scientific">Escherichia coli O45:K1 (strain S88 / ExPEC)</name>
    <dbReference type="NCBI Taxonomy" id="585035"/>
    <lineage>
        <taxon>Bacteria</taxon>
        <taxon>Pseudomonadati</taxon>
        <taxon>Pseudomonadota</taxon>
        <taxon>Gammaproteobacteria</taxon>
        <taxon>Enterobacterales</taxon>
        <taxon>Enterobacteriaceae</taxon>
        <taxon>Escherichia</taxon>
    </lineage>
</organism>
<comment type="function">
    <text evidence="1">Catalyzes the condensation of carbamoyl phosphate and aspartate to form carbamoyl aspartate and inorganic phosphate, the committed step in the de novo pyrimidine nucleotide biosynthesis pathway.</text>
</comment>
<comment type="catalytic activity">
    <reaction evidence="1">
        <text>carbamoyl phosphate + L-aspartate = N-carbamoyl-L-aspartate + phosphate + H(+)</text>
        <dbReference type="Rhea" id="RHEA:20013"/>
        <dbReference type="ChEBI" id="CHEBI:15378"/>
        <dbReference type="ChEBI" id="CHEBI:29991"/>
        <dbReference type="ChEBI" id="CHEBI:32814"/>
        <dbReference type="ChEBI" id="CHEBI:43474"/>
        <dbReference type="ChEBI" id="CHEBI:58228"/>
        <dbReference type="EC" id="2.1.3.2"/>
    </reaction>
</comment>
<comment type="pathway">
    <text evidence="1">Pyrimidine metabolism; UMP biosynthesis via de novo pathway; (S)-dihydroorotate from bicarbonate: step 2/3.</text>
</comment>
<comment type="subunit">
    <text evidence="1">Heterododecamer (2C3:3R2) of six catalytic PyrB chains organized as two trimers (C3), and six regulatory PyrI chains organized as three dimers (R2).</text>
</comment>
<comment type="similarity">
    <text evidence="1">Belongs to the aspartate/ornithine carbamoyltransferase superfamily. ATCase family.</text>
</comment>
<accession>B7MLQ3</accession>
<protein>
    <recommendedName>
        <fullName evidence="1">Aspartate carbamoyltransferase catalytic subunit</fullName>
        <ecNumber evidence="1">2.1.3.2</ecNumber>
    </recommendedName>
    <alternativeName>
        <fullName evidence="1">Aspartate transcarbamylase</fullName>
        <shortName evidence="1">ATCase</shortName>
    </alternativeName>
</protein>
<proteinExistence type="inferred from homology"/>
<evidence type="ECO:0000255" key="1">
    <source>
        <dbReference type="HAMAP-Rule" id="MF_00001"/>
    </source>
</evidence>